<sequence>MEELQGYLEKDRSRQQHFLYPLLFQEYIYALAHNHGLNGSIFYEPVEVFGYDNKSSLVLVKRLIIRIYQQNFWISLVNDSNQNRFVGYNHNNFFXSHFYSQMISESFAIIVEIPFSLRLVSYFEEKEIPKYHNLRSIHSIFPFLEDKLSHLNYVSDILIPHPIHMEILVQILQCWIQDVPFLHLLRFFLHEYHNLNSLLITQKKSIYVFSKENKRLFRFLYNSYVFEWEFLLVFIRKQSSYLRLTSSGTFLERTHFYEKIEHLQIEHFVVVCRNYFHRTLWFCKDPFMHYVRYQGKAILASKGTHLLMKKCKYHFFNFWQYYFHVWSQPYRIHLNQLSNYSFYFLGYLSSLLLNFSAVRNQMLENSFLIDTITKKFDTIVPVIFLIGSLAKAKFCTVSGHPISKPIWTDLSDSDILDRFGRICRNLSHYHSGSSKKQGLYRIKYILRLSCARTLARKHKSTVRTFLRRLGSGLLEEFFTEEEQVLSLIFPKATPFILHGSHRERIWYLDIICINDLVNHS</sequence>
<comment type="function">
    <text evidence="1">Usually encoded in the trnK tRNA gene intron. Probably assists in splicing its own and other chloroplast group II introns.</text>
</comment>
<comment type="subcellular location">
    <subcellularLocation>
        <location>Plastid</location>
        <location>Chloroplast</location>
    </subcellularLocation>
</comment>
<comment type="similarity">
    <text evidence="1">Belongs to the intron maturase 2 family. MatK subfamily.</text>
</comment>
<reference key="1">
    <citation type="book" date="2000" name="Monocots: systematics and evolution">
        <title>Molecular phylogeny of the Convallariaceae (Asparagales).</title>
        <editorList>
            <person name="Wilson K.L."/>
            <person name="Morrison D.A."/>
        </editorList>
        <authorList>
            <person name="Yamashita J."/>
            <person name="Tamura M.N."/>
        </authorList>
    </citation>
    <scope>NUCLEOTIDE SEQUENCE [GENOMIC DNA]</scope>
</reference>
<geneLocation type="chloroplast"/>
<accession>Q9TN89</accession>
<evidence type="ECO:0000255" key="1">
    <source>
        <dbReference type="HAMAP-Rule" id="MF_01390"/>
    </source>
</evidence>
<name>MATK_BEARE</name>
<dbReference type="EMBL" id="AB029799">
    <property type="protein sequence ID" value="BAA83306.1"/>
    <property type="molecule type" value="Genomic_DNA"/>
</dbReference>
<dbReference type="GO" id="GO:0009507">
    <property type="term" value="C:chloroplast"/>
    <property type="evidence" value="ECO:0007669"/>
    <property type="project" value="UniProtKB-SubCell"/>
</dbReference>
<dbReference type="GO" id="GO:0003723">
    <property type="term" value="F:RNA binding"/>
    <property type="evidence" value="ECO:0007669"/>
    <property type="project" value="UniProtKB-KW"/>
</dbReference>
<dbReference type="GO" id="GO:0006397">
    <property type="term" value="P:mRNA processing"/>
    <property type="evidence" value="ECO:0007669"/>
    <property type="project" value="UniProtKB-KW"/>
</dbReference>
<dbReference type="GO" id="GO:0008380">
    <property type="term" value="P:RNA splicing"/>
    <property type="evidence" value="ECO:0007669"/>
    <property type="project" value="UniProtKB-UniRule"/>
</dbReference>
<dbReference type="GO" id="GO:0008033">
    <property type="term" value="P:tRNA processing"/>
    <property type="evidence" value="ECO:0007669"/>
    <property type="project" value="UniProtKB-KW"/>
</dbReference>
<dbReference type="HAMAP" id="MF_01390">
    <property type="entry name" value="MatK"/>
    <property type="match status" value="1"/>
</dbReference>
<dbReference type="InterPro" id="IPR024937">
    <property type="entry name" value="Domain_X"/>
</dbReference>
<dbReference type="InterPro" id="IPR002866">
    <property type="entry name" value="Maturase_MatK"/>
</dbReference>
<dbReference type="InterPro" id="IPR024942">
    <property type="entry name" value="Maturase_MatK_N"/>
</dbReference>
<dbReference type="PANTHER" id="PTHR34811">
    <property type="entry name" value="MATURASE K"/>
    <property type="match status" value="1"/>
</dbReference>
<dbReference type="PANTHER" id="PTHR34811:SF1">
    <property type="entry name" value="MATURASE K"/>
    <property type="match status" value="1"/>
</dbReference>
<dbReference type="Pfam" id="PF01348">
    <property type="entry name" value="Intron_maturas2"/>
    <property type="match status" value="1"/>
</dbReference>
<dbReference type="Pfam" id="PF01824">
    <property type="entry name" value="MatK_N"/>
    <property type="match status" value="1"/>
</dbReference>
<proteinExistence type="inferred from homology"/>
<gene>
    <name evidence="1" type="primary">matK</name>
</gene>
<protein>
    <recommendedName>
        <fullName evidence="1">Maturase K</fullName>
    </recommendedName>
    <alternativeName>
        <fullName evidence="1">Intron maturase</fullName>
    </alternativeName>
</protein>
<feature type="chain" id="PRO_0000143280" description="Maturase K">
    <location>
        <begin position="1"/>
        <end position="520"/>
    </location>
</feature>
<organism>
    <name type="scientific">Beaucarnea recurvata</name>
    <name type="common">Elephant-foot tree</name>
    <dbReference type="NCBI Taxonomy" id="39519"/>
    <lineage>
        <taxon>Eukaryota</taxon>
        <taxon>Viridiplantae</taxon>
        <taxon>Streptophyta</taxon>
        <taxon>Embryophyta</taxon>
        <taxon>Tracheophyta</taxon>
        <taxon>Spermatophyta</taxon>
        <taxon>Magnoliopsida</taxon>
        <taxon>Liliopsida</taxon>
        <taxon>Asparagales</taxon>
        <taxon>Asparagaceae</taxon>
        <taxon>Nolinoideae</taxon>
        <taxon>Beaucarnea</taxon>
    </lineage>
</organism>
<keyword id="KW-0150">Chloroplast</keyword>
<keyword id="KW-0507">mRNA processing</keyword>
<keyword id="KW-0934">Plastid</keyword>
<keyword id="KW-0694">RNA-binding</keyword>
<keyword id="KW-0819">tRNA processing</keyword>